<proteinExistence type="evidence at protein level"/>
<organism>
    <name type="scientific">Bos taurus</name>
    <name type="common">Bovine</name>
    <dbReference type="NCBI Taxonomy" id="9913"/>
    <lineage>
        <taxon>Eukaryota</taxon>
        <taxon>Metazoa</taxon>
        <taxon>Chordata</taxon>
        <taxon>Craniata</taxon>
        <taxon>Vertebrata</taxon>
        <taxon>Euteleostomi</taxon>
        <taxon>Mammalia</taxon>
        <taxon>Eutheria</taxon>
        <taxon>Laurasiatheria</taxon>
        <taxon>Artiodactyla</taxon>
        <taxon>Ruminantia</taxon>
        <taxon>Pecora</taxon>
        <taxon>Bovidae</taxon>
        <taxon>Bovinae</taxon>
        <taxon>Bos</taxon>
    </lineage>
</organism>
<evidence type="ECO:0000250" key="1"/>
<evidence type="ECO:0000250" key="2">
    <source>
        <dbReference type="UniProtKB" id="P27540"/>
    </source>
</evidence>
<evidence type="ECO:0000250" key="3">
    <source>
        <dbReference type="UniProtKB" id="P53762"/>
    </source>
</evidence>
<evidence type="ECO:0000255" key="4">
    <source>
        <dbReference type="PROSITE-ProRule" id="PRU00140"/>
    </source>
</evidence>
<evidence type="ECO:0000255" key="5">
    <source>
        <dbReference type="PROSITE-ProRule" id="PRU00981"/>
    </source>
</evidence>
<evidence type="ECO:0000256" key="6">
    <source>
        <dbReference type="SAM" id="MobiDB-lite"/>
    </source>
</evidence>
<evidence type="ECO:0000269" key="7">
    <source>
    </source>
</evidence>
<evidence type="ECO:0007744" key="8">
    <source>
        <dbReference type="PDB" id="5Y7Y"/>
    </source>
</evidence>
<evidence type="ECO:0007829" key="9">
    <source>
        <dbReference type="PDB" id="5Y7Y"/>
    </source>
</evidence>
<feature type="initiator methionine" description="Removed" evidence="2">
    <location>
        <position position="1"/>
    </location>
</feature>
<feature type="chain" id="PRO_0000274192" description="Aryl hydrocarbon receptor nuclear translocator">
    <location>
        <begin position="2"/>
        <end position="790"/>
    </location>
</feature>
<feature type="domain" description="bHLH" evidence="5">
    <location>
        <begin position="89"/>
        <end position="142"/>
    </location>
</feature>
<feature type="domain" description="PAS 1" evidence="4">
    <location>
        <begin position="161"/>
        <end position="235"/>
    </location>
</feature>
<feature type="domain" description="PAS 2" evidence="4">
    <location>
        <begin position="349"/>
        <end position="419"/>
    </location>
</feature>
<feature type="domain" description="PAC">
    <location>
        <begin position="424"/>
        <end position="467"/>
    </location>
</feature>
<feature type="region of interest" description="Disordered" evidence="6">
    <location>
        <begin position="1"/>
        <end position="96"/>
    </location>
</feature>
<feature type="region of interest" description="DNA-binding" evidence="3">
    <location>
        <begin position="88"/>
        <end position="128"/>
    </location>
</feature>
<feature type="region of interest" description="Required for heterodimer formation with EPAS1" evidence="3">
    <location>
        <begin position="112"/>
        <end position="264"/>
    </location>
</feature>
<feature type="region of interest" description="Required for heterodimer formation with HIF1A" evidence="3">
    <location>
        <begin position="112"/>
        <end position="168"/>
    </location>
</feature>
<feature type="region of interest" description="Mediates the transcription activity and dimerization of the AHR:ARNT complex" evidence="3">
    <location>
        <begin position="167"/>
        <end position="171"/>
    </location>
</feature>
<feature type="region of interest" description="Disordered" evidence="6">
    <location>
        <begin position="465"/>
        <end position="492"/>
    </location>
</feature>
<feature type="region of interest" description="Disordered" evidence="6">
    <location>
        <begin position="514"/>
        <end position="543"/>
    </location>
</feature>
<feature type="region of interest" description="Disordered" evidence="6">
    <location>
        <begin position="661"/>
        <end position="716"/>
    </location>
</feature>
<feature type="region of interest" description="Disordered" evidence="6">
    <location>
        <begin position="728"/>
        <end position="790"/>
    </location>
</feature>
<feature type="compositionally biased region" description="Polar residues" evidence="6">
    <location>
        <begin position="1"/>
        <end position="10"/>
    </location>
</feature>
<feature type="compositionally biased region" description="Gly residues" evidence="6">
    <location>
        <begin position="26"/>
        <end position="35"/>
    </location>
</feature>
<feature type="compositionally biased region" description="Basic and acidic residues" evidence="6">
    <location>
        <begin position="60"/>
        <end position="96"/>
    </location>
</feature>
<feature type="compositionally biased region" description="Polar residues" evidence="6">
    <location>
        <begin position="465"/>
        <end position="490"/>
    </location>
</feature>
<feature type="compositionally biased region" description="Polar residues" evidence="6">
    <location>
        <begin position="520"/>
        <end position="537"/>
    </location>
</feature>
<feature type="compositionally biased region" description="Polar residues" evidence="6">
    <location>
        <begin position="661"/>
        <end position="679"/>
    </location>
</feature>
<feature type="compositionally biased region" description="Low complexity" evidence="6">
    <location>
        <begin position="683"/>
        <end position="697"/>
    </location>
</feature>
<feature type="compositionally biased region" description="Polar residues" evidence="6">
    <location>
        <begin position="741"/>
        <end position="755"/>
    </location>
</feature>
<feature type="modified residue" description="N-acetylalanine" evidence="2">
    <location>
        <position position="2"/>
    </location>
</feature>
<feature type="modified residue" description="Phosphoserine" evidence="2">
    <location>
        <position position="77"/>
    </location>
</feature>
<feature type="cross-link" description="Glycyl lysine isopeptide (Lys-Gly) (interchain with G-Cter in SUMO2)" evidence="2">
    <location>
        <position position="58"/>
    </location>
</feature>
<feature type="helix" evidence="9">
    <location>
        <begin position="99"/>
        <end position="115"/>
    </location>
</feature>
<feature type="helix" evidence="9">
    <location>
        <begin position="117"/>
        <end position="120"/>
    </location>
</feature>
<feature type="helix" evidence="9">
    <location>
        <begin position="128"/>
        <end position="143"/>
    </location>
</feature>
<feature type="helix" evidence="9">
    <location>
        <begin position="161"/>
        <end position="171"/>
    </location>
</feature>
<feature type="strand" evidence="9">
    <location>
        <begin position="174"/>
        <end position="179"/>
    </location>
</feature>
<feature type="strand" evidence="9">
    <location>
        <begin position="181"/>
        <end position="183"/>
    </location>
</feature>
<feature type="helix" evidence="9">
    <location>
        <begin position="193"/>
        <end position="196"/>
    </location>
</feature>
<feature type="turn" evidence="9">
    <location>
        <begin position="202"/>
        <end position="206"/>
    </location>
</feature>
<feature type="helix" evidence="9">
    <location>
        <begin position="210"/>
        <end position="212"/>
    </location>
</feature>
<feature type="helix" evidence="9">
    <location>
        <begin position="220"/>
        <end position="224"/>
    </location>
</feature>
<feature type="strand" evidence="9">
    <location>
        <begin position="263"/>
        <end position="265"/>
    </location>
</feature>
<feature type="strand" evidence="9">
    <location>
        <begin position="306"/>
        <end position="312"/>
    </location>
</feature>
<feature type="strand" evidence="9">
    <location>
        <begin position="337"/>
        <end position="342"/>
    </location>
</feature>
<feature type="strand" evidence="9">
    <location>
        <begin position="362"/>
        <end position="367"/>
    </location>
</feature>
<feature type="strand" evidence="9">
    <location>
        <begin position="372"/>
        <end position="376"/>
    </location>
</feature>
<feature type="helix" evidence="9">
    <location>
        <begin position="380"/>
        <end position="384"/>
    </location>
</feature>
<feature type="helix" evidence="9">
    <location>
        <begin position="388"/>
        <end position="391"/>
    </location>
</feature>
<feature type="helix" evidence="9">
    <location>
        <begin position="396"/>
        <end position="399"/>
    </location>
</feature>
<feature type="helix" evidence="9">
    <location>
        <begin position="402"/>
        <end position="404"/>
    </location>
</feature>
<feature type="helix" evidence="9">
    <location>
        <begin position="405"/>
        <end position="418"/>
    </location>
</feature>
<feature type="strand" evidence="9">
    <location>
        <begin position="423"/>
        <end position="430"/>
    </location>
</feature>
<feature type="strand" evidence="9">
    <location>
        <begin position="436"/>
        <end position="447"/>
    </location>
</feature>
<feature type="turn" evidence="9">
    <location>
        <begin position="449"/>
        <end position="451"/>
    </location>
</feature>
<feature type="strand" evidence="9">
    <location>
        <begin position="454"/>
        <end position="463"/>
    </location>
</feature>
<accession>Q9BE97</accession>
<protein>
    <recommendedName>
        <fullName>Aryl hydrocarbon receptor nuclear translocator</fullName>
        <shortName>ARNT protein</shortName>
    </recommendedName>
</protein>
<reference key="1">
    <citation type="submission" date="2001-01" db="EMBL/GenBank/DDBJ databases">
        <title>Characterization of bovine endothelial aryl hydrocarbon receptor nuclear translocator.</title>
        <authorList>
            <person name="Hara S."/>
            <person name="Takahashi R."/>
            <person name="Kobayashi C."/>
            <person name="Imura N."/>
        </authorList>
    </citation>
    <scope>NUCLEOTIDE SEQUENCE [MRNA]</scope>
</reference>
<reference evidence="8" key="2">
    <citation type="journal article" date="2017" name="J. Biol. Chem.">
        <title>The crystal structure of the AhRR-ARNT heterodimer reveals the structural basis of the repression of AhR-mediated transcription.</title>
        <authorList>
            <person name="Sakurai S."/>
            <person name="Shimizu T."/>
            <person name="Ohto U."/>
        </authorList>
    </citation>
    <scope>X-RAY CRYSTALLOGRAPHY (2.40 ANGSTROMS) OF 82-464 IN COMPLEX WITH AHRR</scope>
    <scope>INTERACTION WITH AHRR</scope>
</reference>
<comment type="function">
    <text evidence="2 3">Required for activity of the AHR. Upon ligand binding, AHR translocates into the nucleus, where it heterodimerizes with ARNT and induces transcription by binding to xenobiotic response elements (XRE). Not required for the ligand-binding subunit to translocate from the cytosol to the nucleus after ligand binding. The complex initiates transcription of genes involved in the regulation of a variety of biological processes, including angiogenesis, hematopoiesis, drug and lipid metabolism, cell motility and immune modulation (By similarity). The heterodimer binds to core DNA sequence 5'-TACGTG-3' within the hypoxia response element (HRE) of target gene promoters and functions as a transcriptional regulator of the adaptive response to hypoxia (By similarity). The heterodimer ARNT:AHR binds to core DNA sequence 5'-TGCGTG-3' within the dioxin response element (DRE) of target gene promoters and activates their transcription (By similarity).</text>
</comment>
<comment type="subunit">
    <text evidence="1 2 3 7">Monomer. Homodimer only upon binding to a DNA (By similarity). Efficient DNA binding requires dimerization with another bHLH protein. Interacts with TACC3 (By similarity). Interacts with HIF1A, EPAS1, NPAS1 and NPAS3; forms a heterodimer that binds core DNA sequence 5'-TACGTG-3' within the hypoxia response element (HRE) of target gene promoters (By similarity). Forms a heterodimer with AHRR, as well as with other bHLH proteins (PubMed:28904176). Interacts with NOCA7 (By similarity). Interacts with TACC3 (By similarity). Interacts with AHR; the heterodimer ARNT:AHR binds to core DNA sequence 5'-TGCGTG-3' within the dioxin response element (DRE) of target gene promoters and activates their transcription (By similarity). Interacts with SIM1 and NPAS4 (By similarity).</text>
</comment>
<comment type="subcellular location">
    <subcellularLocation>
        <location evidence="2">Nucleus</location>
    </subcellularLocation>
</comment>
<keyword id="KW-0002">3D-structure</keyword>
<keyword id="KW-0007">Acetylation</keyword>
<keyword id="KW-0010">Activator</keyword>
<keyword id="KW-0238">DNA-binding</keyword>
<keyword id="KW-1017">Isopeptide bond</keyword>
<keyword id="KW-0539">Nucleus</keyword>
<keyword id="KW-0597">Phosphoprotein</keyword>
<keyword id="KW-1185">Reference proteome</keyword>
<keyword id="KW-0677">Repeat</keyword>
<keyword id="KW-0804">Transcription</keyword>
<keyword id="KW-0805">Transcription regulation</keyword>
<keyword id="KW-0832">Ubl conjugation</keyword>
<gene>
    <name type="primary">ARNT</name>
</gene>
<sequence>MAATTANPEMTSDVPPLGPAIASGNPGPGIQGGGAIVQRAIKRRPGLDFDDDGEGNSKFLRCDDDQMSNDKERFARSDDEQSSADKERLARENHSEIERRRRNKMTAYITELSDMVPTCSALARKPDKLTILRMAVSHMKSLRGTGNTSTDGTYKPSFLTDQELKHLILEAADGFLFIVSCETGRVVYVSDSVTPVLNQPQSEWFGSTLYDQVHPDDVDKLREQLSTSENALTGRILDLKTGTVKKEGQQSSMRMCMGSRRSFICRMRCGNSSVDSVSMNRLSFVRNRCRNGLGSAKDGEPHFVVVHCTGYIKAWPPAGVSLPDDDPEAGQGSKFCLVAIGRLQVTSSPNCTDMSNVCQPTEFISRHNIEGIFTFVDHRCVATVGYQPQELLGKNIVEFCHPEDQQLLRDSFQQVVKLKGQVLSVMFRFRSKNREWLWVRTSSFTFQNPYSDEIEYIICTNTNVKNSSQEPRPSLSNTIQRPQLGPTANLSLEMGSGQLAPRQQQQQTELDVVPGRDGLTSCNHSQVSVQPVTTTGPEHSKPLEKSESLFAQDRDPRFSEIYSNISTDQSKGISSSTVPATQQLFSQGNTFPPTPRPAENFRNSGLAPPVTIVQPSTSAGQMLAQISRHSNPTQGAAPAWTPSTRPGFSAQQVVTEATAKTRSSQFGVGSFQTPSSFSPMSLPGASTASPGAAAYPSLTNRGSNFAPETGQTAGQFQTRTAEGVGVWPQWQGQQSHHRSSSNEQHVQQPSAQQPGQPEVFQEMLSMLGDQSNSYNNEEFPDLTMFPSFSE</sequence>
<name>ARNT_BOVIN</name>
<dbReference type="EMBL" id="AB053954">
    <property type="protein sequence ID" value="BAB40668.1"/>
    <property type="molecule type" value="mRNA"/>
</dbReference>
<dbReference type="RefSeq" id="NP_776418.1">
    <property type="nucleotide sequence ID" value="NM_173993.1"/>
</dbReference>
<dbReference type="PDB" id="5Y7Y">
    <property type="method" value="X-ray"/>
    <property type="resolution" value="2.40 A"/>
    <property type="chains" value="B=82-464"/>
</dbReference>
<dbReference type="PDBsum" id="5Y7Y"/>
<dbReference type="BMRB" id="Q9BE97"/>
<dbReference type="SMR" id="Q9BE97"/>
<dbReference type="BioGRID" id="158383">
    <property type="interactions" value="1"/>
</dbReference>
<dbReference type="FunCoup" id="Q9BE97">
    <property type="interactions" value="3101"/>
</dbReference>
<dbReference type="IntAct" id="Q9BE97">
    <property type="interactions" value="1"/>
</dbReference>
<dbReference type="STRING" id="9913.ENSBTAP00000060357"/>
<dbReference type="PaxDb" id="9913-ENSBTAP00000028023"/>
<dbReference type="GeneID" id="281010"/>
<dbReference type="KEGG" id="bta:281010"/>
<dbReference type="CTD" id="405"/>
<dbReference type="eggNOG" id="KOG3561">
    <property type="taxonomic scope" value="Eukaryota"/>
</dbReference>
<dbReference type="InParanoid" id="Q9BE97"/>
<dbReference type="OrthoDB" id="71302at2759"/>
<dbReference type="Proteomes" id="UP000009136">
    <property type="component" value="Unplaced"/>
</dbReference>
<dbReference type="GO" id="GO:0034751">
    <property type="term" value="C:aryl hydrocarbon receptor complex"/>
    <property type="evidence" value="ECO:0000318"/>
    <property type="project" value="GO_Central"/>
</dbReference>
<dbReference type="GO" id="GO:0005737">
    <property type="term" value="C:cytoplasm"/>
    <property type="evidence" value="ECO:0007669"/>
    <property type="project" value="InterPro"/>
</dbReference>
<dbReference type="GO" id="GO:0034753">
    <property type="term" value="C:nuclear aryl hydrocarbon receptor complex"/>
    <property type="evidence" value="ECO:0000250"/>
    <property type="project" value="UniProtKB"/>
</dbReference>
<dbReference type="GO" id="GO:0005634">
    <property type="term" value="C:nucleus"/>
    <property type="evidence" value="ECO:0000250"/>
    <property type="project" value="UniProtKB"/>
</dbReference>
<dbReference type="GO" id="GO:0005667">
    <property type="term" value="C:transcription regulator complex"/>
    <property type="evidence" value="ECO:0007669"/>
    <property type="project" value="InterPro"/>
</dbReference>
<dbReference type="GO" id="GO:0003700">
    <property type="term" value="F:DNA-binding transcription factor activity"/>
    <property type="evidence" value="ECO:0000250"/>
    <property type="project" value="UniProtKB"/>
</dbReference>
<dbReference type="GO" id="GO:0000981">
    <property type="term" value="F:DNA-binding transcription factor activity, RNA polymerase II-specific"/>
    <property type="evidence" value="ECO:0000318"/>
    <property type="project" value="GO_Central"/>
</dbReference>
<dbReference type="GO" id="GO:0046982">
    <property type="term" value="F:protein heterodimerization activity"/>
    <property type="evidence" value="ECO:0000250"/>
    <property type="project" value="UniProtKB"/>
</dbReference>
<dbReference type="GO" id="GO:0042803">
    <property type="term" value="F:protein homodimerization activity"/>
    <property type="evidence" value="ECO:0000250"/>
    <property type="project" value="UniProtKB"/>
</dbReference>
<dbReference type="GO" id="GO:0000978">
    <property type="term" value="F:RNA polymerase II cis-regulatory region sequence-specific DNA binding"/>
    <property type="evidence" value="ECO:0000318"/>
    <property type="project" value="GO_Central"/>
</dbReference>
<dbReference type="GO" id="GO:0043565">
    <property type="term" value="F:sequence-specific DNA binding"/>
    <property type="evidence" value="ECO:0000250"/>
    <property type="project" value="UniProtKB"/>
</dbReference>
<dbReference type="GO" id="GO:1990837">
    <property type="term" value="F:sequence-specific double-stranded DNA binding"/>
    <property type="evidence" value="ECO:0000250"/>
    <property type="project" value="UniProtKB"/>
</dbReference>
<dbReference type="GO" id="GO:0030522">
    <property type="term" value="P:intracellular receptor signaling pathway"/>
    <property type="evidence" value="ECO:0007669"/>
    <property type="project" value="GOC"/>
</dbReference>
<dbReference type="GO" id="GO:0045944">
    <property type="term" value="P:positive regulation of transcription by RNA polymerase II"/>
    <property type="evidence" value="ECO:0000250"/>
    <property type="project" value="UniProtKB"/>
</dbReference>
<dbReference type="GO" id="GO:0006357">
    <property type="term" value="P:regulation of transcription by RNA polymerase II"/>
    <property type="evidence" value="ECO:0000318"/>
    <property type="project" value="GO_Central"/>
</dbReference>
<dbReference type="CDD" id="cd18947">
    <property type="entry name" value="bHLH-PAS_ARNT"/>
    <property type="match status" value="1"/>
</dbReference>
<dbReference type="CDD" id="cd00130">
    <property type="entry name" value="PAS"/>
    <property type="match status" value="2"/>
</dbReference>
<dbReference type="FunFam" id="3.30.450.20:FF:000028">
    <property type="entry name" value="Aryl hydrocarbon receptor nuclear translocator 1"/>
    <property type="match status" value="1"/>
</dbReference>
<dbReference type="FunFam" id="3.30.450.20:FF:000003">
    <property type="entry name" value="Aryl hydrocarbon receptor nuclear translocator 2"/>
    <property type="match status" value="1"/>
</dbReference>
<dbReference type="FunFam" id="4.10.280.10:FF:000011">
    <property type="entry name" value="Aryl hydrocarbon receptor nuclear translocator 2"/>
    <property type="match status" value="1"/>
</dbReference>
<dbReference type="Gene3D" id="4.10.280.10">
    <property type="entry name" value="Helix-loop-helix DNA-binding domain"/>
    <property type="match status" value="1"/>
</dbReference>
<dbReference type="Gene3D" id="3.30.450.20">
    <property type="entry name" value="PAS domain"/>
    <property type="match status" value="2"/>
</dbReference>
<dbReference type="InterPro" id="IPR011598">
    <property type="entry name" value="bHLH_dom"/>
</dbReference>
<dbReference type="InterPro" id="IPR050933">
    <property type="entry name" value="Circadian_TF"/>
</dbReference>
<dbReference type="InterPro" id="IPR036638">
    <property type="entry name" value="HLH_DNA-bd_sf"/>
</dbReference>
<dbReference type="InterPro" id="IPR001067">
    <property type="entry name" value="Nuc_translocat"/>
</dbReference>
<dbReference type="InterPro" id="IPR001610">
    <property type="entry name" value="PAC"/>
</dbReference>
<dbReference type="InterPro" id="IPR000014">
    <property type="entry name" value="PAS"/>
</dbReference>
<dbReference type="InterPro" id="IPR035965">
    <property type="entry name" value="PAS-like_dom_sf"/>
</dbReference>
<dbReference type="InterPro" id="IPR013767">
    <property type="entry name" value="PAS_fold"/>
</dbReference>
<dbReference type="NCBIfam" id="TIGR00229">
    <property type="entry name" value="sensory_box"/>
    <property type="match status" value="1"/>
</dbReference>
<dbReference type="PANTHER" id="PTHR23042">
    <property type="entry name" value="CIRCADIAN PROTEIN CLOCK/ARNT/BMAL/PAS"/>
    <property type="match status" value="1"/>
</dbReference>
<dbReference type="Pfam" id="PF00010">
    <property type="entry name" value="HLH"/>
    <property type="match status" value="1"/>
</dbReference>
<dbReference type="Pfam" id="PF00989">
    <property type="entry name" value="PAS"/>
    <property type="match status" value="1"/>
</dbReference>
<dbReference type="Pfam" id="PF14598">
    <property type="entry name" value="PAS_11"/>
    <property type="match status" value="1"/>
</dbReference>
<dbReference type="PRINTS" id="PR00785">
    <property type="entry name" value="NCTRNSLOCATR"/>
</dbReference>
<dbReference type="SMART" id="SM00353">
    <property type="entry name" value="HLH"/>
    <property type="match status" value="1"/>
</dbReference>
<dbReference type="SMART" id="SM00086">
    <property type="entry name" value="PAC"/>
    <property type="match status" value="1"/>
</dbReference>
<dbReference type="SMART" id="SM00091">
    <property type="entry name" value="PAS"/>
    <property type="match status" value="2"/>
</dbReference>
<dbReference type="SUPFAM" id="SSF47459">
    <property type="entry name" value="HLH, helix-loop-helix DNA-binding domain"/>
    <property type="match status" value="1"/>
</dbReference>
<dbReference type="SUPFAM" id="SSF88633">
    <property type="entry name" value="Positive stranded ssRNA viruses"/>
    <property type="match status" value="1"/>
</dbReference>
<dbReference type="SUPFAM" id="SSF55785">
    <property type="entry name" value="PYP-like sensor domain (PAS domain)"/>
    <property type="match status" value="2"/>
</dbReference>
<dbReference type="PROSITE" id="PS50888">
    <property type="entry name" value="BHLH"/>
    <property type="match status" value="1"/>
</dbReference>
<dbReference type="PROSITE" id="PS50112">
    <property type="entry name" value="PAS"/>
    <property type="match status" value="2"/>
</dbReference>